<accession>A1AV44</accession>
<keyword id="KW-0997">Cell inner membrane</keyword>
<keyword id="KW-1003">Cell membrane</keyword>
<keyword id="KW-0143">Chaperone</keyword>
<keyword id="KW-0472">Membrane</keyword>
<keyword id="KW-0653">Protein transport</keyword>
<keyword id="KW-1185">Reference proteome</keyword>
<keyword id="KW-0812">Transmembrane</keyword>
<keyword id="KW-1133">Transmembrane helix</keyword>
<keyword id="KW-0813">Transport</keyword>
<comment type="function">
    <text evidence="1">Required for the insertion and/or proper folding and/or complex formation of integral membrane proteins into the membrane. Involved in integration of membrane proteins that insert both dependently and independently of the Sec translocase complex, as well as at least some lipoproteins. Aids folding of multispanning membrane proteins.</text>
</comment>
<comment type="subunit">
    <text evidence="1">Interacts with the Sec translocase complex via SecD. Specifically interacts with transmembrane segments of nascent integral membrane proteins during membrane integration.</text>
</comment>
<comment type="subcellular location">
    <subcellularLocation>
        <location evidence="1">Cell inner membrane</location>
        <topology evidence="1">Multi-pass membrane protein</topology>
    </subcellularLocation>
</comment>
<comment type="similarity">
    <text evidence="1">Belongs to the OXA1/ALB3/YidC family. Type 1 subfamily.</text>
</comment>
<gene>
    <name evidence="1" type="primary">yidC</name>
    <name type="ordered locus">Ppro_3623</name>
</gene>
<dbReference type="EMBL" id="CP000482">
    <property type="protein sequence ID" value="ABL01215.1"/>
    <property type="molecule type" value="Genomic_DNA"/>
</dbReference>
<dbReference type="RefSeq" id="WP_011737427.1">
    <property type="nucleotide sequence ID" value="NC_008609.1"/>
</dbReference>
<dbReference type="SMR" id="A1AV44"/>
<dbReference type="STRING" id="338966.Ppro_3623"/>
<dbReference type="KEGG" id="ppd:Ppro_3623"/>
<dbReference type="eggNOG" id="COG0706">
    <property type="taxonomic scope" value="Bacteria"/>
</dbReference>
<dbReference type="HOGENOM" id="CLU_016535_3_0_7"/>
<dbReference type="OrthoDB" id="9780552at2"/>
<dbReference type="Proteomes" id="UP000006732">
    <property type="component" value="Chromosome"/>
</dbReference>
<dbReference type="GO" id="GO:0005886">
    <property type="term" value="C:plasma membrane"/>
    <property type="evidence" value="ECO:0007669"/>
    <property type="project" value="UniProtKB-SubCell"/>
</dbReference>
<dbReference type="GO" id="GO:0032977">
    <property type="term" value="F:membrane insertase activity"/>
    <property type="evidence" value="ECO:0007669"/>
    <property type="project" value="InterPro"/>
</dbReference>
<dbReference type="GO" id="GO:0051205">
    <property type="term" value="P:protein insertion into membrane"/>
    <property type="evidence" value="ECO:0007669"/>
    <property type="project" value="TreeGrafter"/>
</dbReference>
<dbReference type="GO" id="GO:0015031">
    <property type="term" value="P:protein transport"/>
    <property type="evidence" value="ECO:0007669"/>
    <property type="project" value="UniProtKB-KW"/>
</dbReference>
<dbReference type="CDD" id="cd20070">
    <property type="entry name" value="5TM_YidC_Alb3"/>
    <property type="match status" value="1"/>
</dbReference>
<dbReference type="CDD" id="cd19961">
    <property type="entry name" value="EcYidC-like_peri"/>
    <property type="match status" value="1"/>
</dbReference>
<dbReference type="Gene3D" id="2.70.98.90">
    <property type="match status" value="1"/>
</dbReference>
<dbReference type="HAMAP" id="MF_01810">
    <property type="entry name" value="YidC_type1"/>
    <property type="match status" value="1"/>
</dbReference>
<dbReference type="InterPro" id="IPR019998">
    <property type="entry name" value="Membr_insert_YidC"/>
</dbReference>
<dbReference type="InterPro" id="IPR028053">
    <property type="entry name" value="Membr_insert_YidC_N"/>
</dbReference>
<dbReference type="InterPro" id="IPR001708">
    <property type="entry name" value="YidC/ALB3/OXA1/COX18"/>
</dbReference>
<dbReference type="InterPro" id="IPR028055">
    <property type="entry name" value="YidC/Oxa/ALB_C"/>
</dbReference>
<dbReference type="InterPro" id="IPR047196">
    <property type="entry name" value="YidC_ALB_C"/>
</dbReference>
<dbReference type="InterPro" id="IPR038221">
    <property type="entry name" value="YidC_periplasmic_sf"/>
</dbReference>
<dbReference type="NCBIfam" id="NF002353">
    <property type="entry name" value="PRK01318.1-4"/>
    <property type="match status" value="1"/>
</dbReference>
<dbReference type="NCBIfam" id="TIGR03593">
    <property type="entry name" value="yidC_nterm"/>
    <property type="match status" value="1"/>
</dbReference>
<dbReference type="NCBIfam" id="TIGR03592">
    <property type="entry name" value="yidC_oxa1_cterm"/>
    <property type="match status" value="1"/>
</dbReference>
<dbReference type="PANTHER" id="PTHR12428:SF65">
    <property type="entry name" value="CYTOCHROME C OXIDASE ASSEMBLY PROTEIN COX18, MITOCHONDRIAL"/>
    <property type="match status" value="1"/>
</dbReference>
<dbReference type="PANTHER" id="PTHR12428">
    <property type="entry name" value="OXA1"/>
    <property type="match status" value="1"/>
</dbReference>
<dbReference type="Pfam" id="PF02096">
    <property type="entry name" value="60KD_IMP"/>
    <property type="match status" value="1"/>
</dbReference>
<dbReference type="Pfam" id="PF14849">
    <property type="entry name" value="YidC_periplas"/>
    <property type="match status" value="1"/>
</dbReference>
<dbReference type="PRINTS" id="PR00701">
    <property type="entry name" value="60KDINNERMP"/>
</dbReference>
<dbReference type="PRINTS" id="PR01900">
    <property type="entry name" value="YIDCPROTEIN"/>
</dbReference>
<organism>
    <name type="scientific">Pelobacter propionicus (strain DSM 2379 / NBRC 103807 / OttBd1)</name>
    <dbReference type="NCBI Taxonomy" id="338966"/>
    <lineage>
        <taxon>Bacteria</taxon>
        <taxon>Pseudomonadati</taxon>
        <taxon>Thermodesulfobacteriota</taxon>
        <taxon>Desulfuromonadia</taxon>
        <taxon>Desulfuromonadales</taxon>
        <taxon>Desulfuromonadaceae</taxon>
        <taxon>Pelobacter</taxon>
    </lineage>
</organism>
<name>YIDC_PELPD</name>
<evidence type="ECO:0000255" key="1">
    <source>
        <dbReference type="HAMAP-Rule" id="MF_01810"/>
    </source>
</evidence>
<evidence type="ECO:0000256" key="2">
    <source>
        <dbReference type="SAM" id="MobiDB-lite"/>
    </source>
</evidence>
<proteinExistence type="inferred from homology"/>
<protein>
    <recommendedName>
        <fullName evidence="1">Membrane protein insertase YidC</fullName>
    </recommendedName>
    <alternativeName>
        <fullName evidence="1">Foldase YidC</fullName>
    </alternativeName>
    <alternativeName>
        <fullName evidence="1">Membrane integrase YidC</fullName>
    </alternativeName>
    <alternativeName>
        <fullName evidence="1">Membrane protein YidC</fullName>
    </alternativeName>
</protein>
<feature type="chain" id="PRO_1000070133" description="Membrane protein insertase YidC">
    <location>
        <begin position="1"/>
        <end position="542"/>
    </location>
</feature>
<feature type="transmembrane region" description="Helical" evidence="1">
    <location>
        <begin position="5"/>
        <end position="25"/>
    </location>
</feature>
<feature type="transmembrane region" description="Helical" evidence="1">
    <location>
        <begin position="323"/>
        <end position="343"/>
    </location>
</feature>
<feature type="transmembrane region" description="Helical" evidence="1">
    <location>
        <begin position="345"/>
        <end position="365"/>
    </location>
</feature>
<feature type="transmembrane region" description="Helical" evidence="1">
    <location>
        <begin position="419"/>
        <end position="439"/>
    </location>
</feature>
<feature type="transmembrane region" description="Helical" evidence="1">
    <location>
        <begin position="463"/>
        <end position="483"/>
    </location>
</feature>
<feature type="transmembrane region" description="Helical" evidence="1">
    <location>
        <begin position="500"/>
        <end position="520"/>
    </location>
</feature>
<feature type="region of interest" description="Disordered" evidence="2">
    <location>
        <begin position="33"/>
        <end position="64"/>
    </location>
</feature>
<feature type="compositionally biased region" description="Low complexity" evidence="2">
    <location>
        <begin position="54"/>
        <end position="64"/>
    </location>
</feature>
<sequence>MEKRTLLAVILSITVFYVFSLLFAPEKKPVQPESTGQAVSAPVSAGQPVAGGVQPSASAPSLPATAQQQDVTVRTGLYTAVFCSRGGALKSLTLKNYREKNLPDAQAVVLGSDADPSALTFSTRASGFNLPEGAPFVADATAVTMAGGEKKQLVFTHNSGQGFTVRKIYTFSGDSYGIKLDTQVFNNMAVPLVGTVQQVMTYPGLVKAKDSRFETAGSYLFSDNSLESDKLKDVSSASKLYDKNLQWSGFADKYFLTAILSEGGSIASVELRKNGAGFLESTVSSPRITVTPGQSVTVVHRLFVGPKDIDILKAQGNSLEQSLDLGWFTVIAKPLLYTLKYFYRYVGNYGVAIIIITIILKALFFPLTHKSYKSMKDMQKIQPMMAALKEKYKDDREGMNKAVMELYRDHKVNPLGGCLPMLVQIPVFFALYKALMFSIELRHAPFYFWITDLSGPDNLFGQMLGLPFVIGPLPLLMGATMFIQQKMTPSTMDPMQAKMMLALPVVFTFMFLNFPSGLVLYWLLNNILTIGQQMYINKLVND</sequence>
<reference key="1">
    <citation type="submission" date="2006-10" db="EMBL/GenBank/DDBJ databases">
        <title>Complete sequence of chromosome of Pelobacter propionicus DSM 2379.</title>
        <authorList>
            <consortium name="US DOE Joint Genome Institute"/>
            <person name="Copeland A."/>
            <person name="Lucas S."/>
            <person name="Lapidus A."/>
            <person name="Barry K."/>
            <person name="Detter J.C."/>
            <person name="Glavina del Rio T."/>
            <person name="Hammon N."/>
            <person name="Israni S."/>
            <person name="Dalin E."/>
            <person name="Tice H."/>
            <person name="Pitluck S."/>
            <person name="Saunders E."/>
            <person name="Brettin T."/>
            <person name="Bruce D."/>
            <person name="Han C."/>
            <person name="Tapia R."/>
            <person name="Schmutz J."/>
            <person name="Larimer F."/>
            <person name="Land M."/>
            <person name="Hauser L."/>
            <person name="Kyrpides N."/>
            <person name="Kim E."/>
            <person name="Lovley D."/>
            <person name="Richardson P."/>
        </authorList>
    </citation>
    <scope>NUCLEOTIDE SEQUENCE [LARGE SCALE GENOMIC DNA]</scope>
    <source>
        <strain>DSM 2379 / NBRC 103807 / OttBd1</strain>
    </source>
</reference>